<feature type="chain" id="PRO_0000235064" description="4-diphosphocytidyl-2-C-methyl-D-erythritol kinase">
    <location>
        <begin position="1"/>
        <end position="289"/>
    </location>
</feature>
<feature type="active site" evidence="1">
    <location>
        <position position="10"/>
    </location>
</feature>
<feature type="active site" evidence="1">
    <location>
        <position position="136"/>
    </location>
</feature>
<feature type="binding site" evidence="1">
    <location>
        <begin position="94"/>
        <end position="104"/>
    </location>
    <ligand>
        <name>ATP</name>
        <dbReference type="ChEBI" id="CHEBI:30616"/>
    </ligand>
</feature>
<gene>
    <name evidence="1" type="primary">ispE</name>
    <name type="ordered locus">BLi00059</name>
    <name type="ordered locus">BL00525</name>
</gene>
<comment type="function">
    <text evidence="1">Catalyzes the phosphorylation of the position 2 hydroxy group of 4-diphosphocytidyl-2C-methyl-D-erythritol.</text>
</comment>
<comment type="catalytic activity">
    <reaction evidence="1">
        <text>4-CDP-2-C-methyl-D-erythritol + ATP = 4-CDP-2-C-methyl-D-erythritol 2-phosphate + ADP + H(+)</text>
        <dbReference type="Rhea" id="RHEA:18437"/>
        <dbReference type="ChEBI" id="CHEBI:15378"/>
        <dbReference type="ChEBI" id="CHEBI:30616"/>
        <dbReference type="ChEBI" id="CHEBI:57823"/>
        <dbReference type="ChEBI" id="CHEBI:57919"/>
        <dbReference type="ChEBI" id="CHEBI:456216"/>
        <dbReference type="EC" id="2.7.1.148"/>
    </reaction>
</comment>
<comment type="pathway">
    <text evidence="1">Isoprenoid biosynthesis; isopentenyl diphosphate biosynthesis via DXP pathway; isopentenyl diphosphate from 1-deoxy-D-xylulose 5-phosphate: step 3/6.</text>
</comment>
<comment type="similarity">
    <text evidence="1">Belongs to the GHMP kinase family. IspE subfamily.</text>
</comment>
<accession>Q65PH5</accession>
<accession>Q62ZW4</accession>
<evidence type="ECO:0000255" key="1">
    <source>
        <dbReference type="HAMAP-Rule" id="MF_00061"/>
    </source>
</evidence>
<sequence>MRILEKAPAKINLSLDVRHKRPDGYHEVEMVMTTIDLADRVELTELAEDKVTVSSHNRFVPDDQRNLAYQAAMLMKERYGIKKGVSIFITKVIPVAAGLAGGSSDAAAVFRGLNRLWDLKLSMNELAELGAEIGSDVSFCVHGGTALATGRGEKIRHIETPPHCWVVLAKPTIGVSTAEVYKQLKVDEIEHPDVQGMIAAIEEKNFQKMCDKLGNVLESVTLNMHPEVAMIKNQMKRFGADAVLMSGSGPTVFGLVQYESKVQRIYNGLRGFCDQVYAVRMIGEQNELD</sequence>
<keyword id="KW-0067">ATP-binding</keyword>
<keyword id="KW-0414">Isoprene biosynthesis</keyword>
<keyword id="KW-0418">Kinase</keyword>
<keyword id="KW-0547">Nucleotide-binding</keyword>
<keyword id="KW-1185">Reference proteome</keyword>
<keyword id="KW-0808">Transferase</keyword>
<reference key="1">
    <citation type="journal article" date="2004" name="J. Mol. Microbiol. Biotechnol.">
        <title>The complete genome sequence of Bacillus licheniformis DSM13, an organism with great industrial potential.</title>
        <authorList>
            <person name="Veith B."/>
            <person name="Herzberg C."/>
            <person name="Steckel S."/>
            <person name="Feesche J."/>
            <person name="Maurer K.H."/>
            <person name="Ehrenreich P."/>
            <person name="Baeumer S."/>
            <person name="Henne A."/>
            <person name="Liesegang H."/>
            <person name="Merkl R."/>
            <person name="Ehrenreich A."/>
            <person name="Gottschalk G."/>
        </authorList>
    </citation>
    <scope>NUCLEOTIDE SEQUENCE [LARGE SCALE GENOMIC DNA]</scope>
    <source>
        <strain>ATCC 14580 / DSM 13 / JCM 2505 / CCUG 7422 / NBRC 12200 / NCIMB 9375 / NCTC 10341 / NRRL NRS-1264 / Gibson 46</strain>
    </source>
</reference>
<reference key="2">
    <citation type="journal article" date="2004" name="Genome Biol.">
        <title>Complete genome sequence of the industrial bacterium Bacillus licheniformis and comparisons with closely related Bacillus species.</title>
        <authorList>
            <person name="Rey M.W."/>
            <person name="Ramaiya P."/>
            <person name="Nelson B.A."/>
            <person name="Brody-Karpin S.D."/>
            <person name="Zaretsky E.J."/>
            <person name="Tang M."/>
            <person name="Lopez de Leon A."/>
            <person name="Xiang H."/>
            <person name="Gusti V."/>
            <person name="Clausen I.G."/>
            <person name="Olsen P.B."/>
            <person name="Rasmussen M.D."/>
            <person name="Andersen J.T."/>
            <person name="Joergensen P.L."/>
            <person name="Larsen T.S."/>
            <person name="Sorokin A."/>
            <person name="Bolotin A."/>
            <person name="Lapidus A."/>
            <person name="Galleron N."/>
            <person name="Ehrlich S.D."/>
            <person name="Berka R.M."/>
        </authorList>
    </citation>
    <scope>NUCLEOTIDE SEQUENCE [LARGE SCALE GENOMIC DNA]</scope>
    <source>
        <strain>ATCC 14580 / DSM 13 / JCM 2505 / CCUG 7422 / NBRC 12200 / NCIMB 9375 / NCTC 10341 / NRRL NRS-1264 / Gibson 46</strain>
    </source>
</reference>
<organism>
    <name type="scientific">Bacillus licheniformis (strain ATCC 14580 / DSM 13 / JCM 2505 / CCUG 7422 / NBRC 12200 / NCIMB 9375 / NCTC 10341 / NRRL NRS-1264 / Gibson 46)</name>
    <dbReference type="NCBI Taxonomy" id="279010"/>
    <lineage>
        <taxon>Bacteria</taxon>
        <taxon>Bacillati</taxon>
        <taxon>Bacillota</taxon>
        <taxon>Bacilli</taxon>
        <taxon>Bacillales</taxon>
        <taxon>Bacillaceae</taxon>
        <taxon>Bacillus</taxon>
    </lineage>
</organism>
<proteinExistence type="inferred from homology"/>
<dbReference type="EC" id="2.7.1.148" evidence="1"/>
<dbReference type="EMBL" id="AE017333">
    <property type="protein sequence ID" value="AAU39039.1"/>
    <property type="molecule type" value="Genomic_DNA"/>
</dbReference>
<dbReference type="EMBL" id="CP000002">
    <property type="protein sequence ID" value="AAU21694.2"/>
    <property type="molecule type" value="Genomic_DNA"/>
</dbReference>
<dbReference type="RefSeq" id="WP_011197465.1">
    <property type="nucleotide sequence ID" value="NC_006322.1"/>
</dbReference>
<dbReference type="SMR" id="Q65PH5"/>
<dbReference type="STRING" id="279010.BL00525"/>
<dbReference type="GeneID" id="92858989"/>
<dbReference type="KEGG" id="bld:BLi00059"/>
<dbReference type="KEGG" id="bli:BL00525"/>
<dbReference type="PATRIC" id="fig|279010.13.peg.51"/>
<dbReference type="eggNOG" id="COG1947">
    <property type="taxonomic scope" value="Bacteria"/>
</dbReference>
<dbReference type="HOGENOM" id="CLU_053057_1_1_9"/>
<dbReference type="UniPathway" id="UPA00056">
    <property type="reaction ID" value="UER00094"/>
</dbReference>
<dbReference type="Proteomes" id="UP000000606">
    <property type="component" value="Chromosome"/>
</dbReference>
<dbReference type="GO" id="GO:0050515">
    <property type="term" value="F:4-(cytidine 5'-diphospho)-2-C-methyl-D-erythritol kinase activity"/>
    <property type="evidence" value="ECO:0007669"/>
    <property type="project" value="UniProtKB-UniRule"/>
</dbReference>
<dbReference type="GO" id="GO:0005524">
    <property type="term" value="F:ATP binding"/>
    <property type="evidence" value="ECO:0007669"/>
    <property type="project" value="UniProtKB-UniRule"/>
</dbReference>
<dbReference type="GO" id="GO:0019288">
    <property type="term" value="P:isopentenyl diphosphate biosynthetic process, methylerythritol 4-phosphate pathway"/>
    <property type="evidence" value="ECO:0007669"/>
    <property type="project" value="UniProtKB-UniRule"/>
</dbReference>
<dbReference type="GO" id="GO:0016114">
    <property type="term" value="P:terpenoid biosynthetic process"/>
    <property type="evidence" value="ECO:0007669"/>
    <property type="project" value="InterPro"/>
</dbReference>
<dbReference type="FunFam" id="3.30.230.10:FF:000029">
    <property type="entry name" value="4-diphosphocytidyl-2-C-methyl-D-erythritol kinase"/>
    <property type="match status" value="1"/>
</dbReference>
<dbReference type="FunFam" id="3.30.70.890:FF:000006">
    <property type="entry name" value="4-diphosphocytidyl-2-C-methyl-D-erythritol kinase"/>
    <property type="match status" value="1"/>
</dbReference>
<dbReference type="Gene3D" id="3.30.230.10">
    <property type="match status" value="1"/>
</dbReference>
<dbReference type="Gene3D" id="3.30.70.890">
    <property type="entry name" value="GHMP kinase, C-terminal domain"/>
    <property type="match status" value="1"/>
</dbReference>
<dbReference type="HAMAP" id="MF_00061">
    <property type="entry name" value="IspE"/>
    <property type="match status" value="1"/>
</dbReference>
<dbReference type="InterPro" id="IPR013750">
    <property type="entry name" value="GHMP_kinase_C_dom"/>
</dbReference>
<dbReference type="InterPro" id="IPR036554">
    <property type="entry name" value="GHMP_kinase_C_sf"/>
</dbReference>
<dbReference type="InterPro" id="IPR006204">
    <property type="entry name" value="GHMP_kinase_N_dom"/>
</dbReference>
<dbReference type="InterPro" id="IPR004424">
    <property type="entry name" value="IspE"/>
</dbReference>
<dbReference type="InterPro" id="IPR020568">
    <property type="entry name" value="Ribosomal_Su5_D2-typ_SF"/>
</dbReference>
<dbReference type="InterPro" id="IPR014721">
    <property type="entry name" value="Ribsml_uS5_D2-typ_fold_subgr"/>
</dbReference>
<dbReference type="NCBIfam" id="TIGR00154">
    <property type="entry name" value="ispE"/>
    <property type="match status" value="1"/>
</dbReference>
<dbReference type="NCBIfam" id="NF011202">
    <property type="entry name" value="PRK14608.1"/>
    <property type="match status" value="1"/>
</dbReference>
<dbReference type="PANTHER" id="PTHR43527">
    <property type="entry name" value="4-DIPHOSPHOCYTIDYL-2-C-METHYL-D-ERYTHRITOL KINASE, CHLOROPLASTIC"/>
    <property type="match status" value="1"/>
</dbReference>
<dbReference type="PANTHER" id="PTHR43527:SF2">
    <property type="entry name" value="4-DIPHOSPHOCYTIDYL-2-C-METHYL-D-ERYTHRITOL KINASE, CHLOROPLASTIC"/>
    <property type="match status" value="1"/>
</dbReference>
<dbReference type="Pfam" id="PF08544">
    <property type="entry name" value="GHMP_kinases_C"/>
    <property type="match status" value="1"/>
</dbReference>
<dbReference type="Pfam" id="PF00288">
    <property type="entry name" value="GHMP_kinases_N"/>
    <property type="match status" value="1"/>
</dbReference>
<dbReference type="PIRSF" id="PIRSF010376">
    <property type="entry name" value="IspE"/>
    <property type="match status" value="1"/>
</dbReference>
<dbReference type="SUPFAM" id="SSF55060">
    <property type="entry name" value="GHMP Kinase, C-terminal domain"/>
    <property type="match status" value="1"/>
</dbReference>
<dbReference type="SUPFAM" id="SSF54211">
    <property type="entry name" value="Ribosomal protein S5 domain 2-like"/>
    <property type="match status" value="1"/>
</dbReference>
<name>ISPE_BACLD</name>
<protein>
    <recommendedName>
        <fullName evidence="1">4-diphosphocytidyl-2-C-methyl-D-erythritol kinase</fullName>
        <shortName evidence="1">CMK</shortName>
        <ecNumber evidence="1">2.7.1.148</ecNumber>
    </recommendedName>
    <alternativeName>
        <fullName evidence="1">4-(cytidine-5'-diphospho)-2-C-methyl-D-erythritol kinase</fullName>
    </alternativeName>
</protein>